<reference key="1">
    <citation type="journal article" date="2005" name="Nucleic Acids Res.">
        <title>The genome sequence of Xanthomonas oryzae pathovar oryzae KACC10331, the bacterial blight pathogen of rice.</title>
        <authorList>
            <person name="Lee B.-M."/>
            <person name="Park Y.-J."/>
            <person name="Park D.-S."/>
            <person name="Kang H.-W."/>
            <person name="Kim J.-G."/>
            <person name="Song E.-S."/>
            <person name="Park I.-C."/>
            <person name="Yoon U.-H."/>
            <person name="Hahn J.-H."/>
            <person name="Koo B.-S."/>
            <person name="Lee G.-B."/>
            <person name="Kim H."/>
            <person name="Park H.-S."/>
            <person name="Yoon K.-O."/>
            <person name="Kim J.-H."/>
            <person name="Jung C.-H."/>
            <person name="Koh N.-H."/>
            <person name="Seo J.-S."/>
            <person name="Go S.-J."/>
        </authorList>
    </citation>
    <scope>NUCLEOTIDE SEQUENCE [LARGE SCALE GENOMIC DNA]</scope>
    <source>
        <strain>KACC10331 / KXO85</strain>
    </source>
</reference>
<sequence length="210" mass="23452">MPSRSKSSQRWLKEHFADPYVKKARAEGMRSRAAYKLEELLQRDRLLKPGMVVVDLGAAPGGWSQQVRKSMGDSGRVVALDILDMPALAGVEFLHGDFREQAVLSQFEAMLGDVPVDLVLSDMAPNKSGMDAVDQPRMMHLAELAMEFADAHLKPGGAFLIKLFQGVGSDDYIRELRRRYEKVTIRKPAASRKRSPEVYALGQGKRVQIK</sequence>
<name>RLME_XANOR</name>
<evidence type="ECO:0000255" key="1">
    <source>
        <dbReference type="HAMAP-Rule" id="MF_01547"/>
    </source>
</evidence>
<evidence type="ECO:0000305" key="2"/>
<comment type="function">
    <text evidence="1">Specifically methylates the uridine in position 2552 of 23S rRNA at the 2'-O position of the ribose in the fully assembled 50S ribosomal subunit.</text>
</comment>
<comment type="catalytic activity">
    <reaction evidence="1">
        <text>uridine(2552) in 23S rRNA + S-adenosyl-L-methionine = 2'-O-methyluridine(2552) in 23S rRNA + S-adenosyl-L-homocysteine + H(+)</text>
        <dbReference type="Rhea" id="RHEA:42720"/>
        <dbReference type="Rhea" id="RHEA-COMP:10202"/>
        <dbReference type="Rhea" id="RHEA-COMP:10203"/>
        <dbReference type="ChEBI" id="CHEBI:15378"/>
        <dbReference type="ChEBI" id="CHEBI:57856"/>
        <dbReference type="ChEBI" id="CHEBI:59789"/>
        <dbReference type="ChEBI" id="CHEBI:65315"/>
        <dbReference type="ChEBI" id="CHEBI:74478"/>
        <dbReference type="EC" id="2.1.1.166"/>
    </reaction>
</comment>
<comment type="subcellular location">
    <subcellularLocation>
        <location evidence="1">Cytoplasm</location>
    </subcellularLocation>
</comment>
<comment type="similarity">
    <text evidence="1">Belongs to the class I-like SAM-binding methyltransferase superfamily. RNA methyltransferase RlmE family.</text>
</comment>
<comment type="sequence caution" evidence="2">
    <conflict type="erroneous initiation">
        <sequence resource="EMBL-CDS" id="AAW76204"/>
    </conflict>
</comment>
<accession>Q5GYL7</accession>
<dbReference type="EC" id="2.1.1.166" evidence="1"/>
<dbReference type="EMBL" id="AE013598">
    <property type="protein sequence ID" value="AAW76204.1"/>
    <property type="status" value="ALT_INIT"/>
    <property type="molecule type" value="Genomic_DNA"/>
</dbReference>
<dbReference type="SMR" id="Q5GYL7"/>
<dbReference type="STRING" id="291331.XOO2950"/>
<dbReference type="KEGG" id="xoo:XOO2950"/>
<dbReference type="HOGENOM" id="CLU_009422_4_0_6"/>
<dbReference type="Proteomes" id="UP000006735">
    <property type="component" value="Chromosome"/>
</dbReference>
<dbReference type="GO" id="GO:0005737">
    <property type="term" value="C:cytoplasm"/>
    <property type="evidence" value="ECO:0007669"/>
    <property type="project" value="UniProtKB-SubCell"/>
</dbReference>
<dbReference type="GO" id="GO:0008650">
    <property type="term" value="F:rRNA (uridine-2'-O-)-methyltransferase activity"/>
    <property type="evidence" value="ECO:0007669"/>
    <property type="project" value="UniProtKB-UniRule"/>
</dbReference>
<dbReference type="FunFam" id="3.40.50.150:FF:000005">
    <property type="entry name" value="Ribosomal RNA large subunit methyltransferase E"/>
    <property type="match status" value="1"/>
</dbReference>
<dbReference type="Gene3D" id="3.40.50.150">
    <property type="entry name" value="Vaccinia Virus protein VP39"/>
    <property type="match status" value="1"/>
</dbReference>
<dbReference type="HAMAP" id="MF_01547">
    <property type="entry name" value="RNA_methyltr_E"/>
    <property type="match status" value="1"/>
</dbReference>
<dbReference type="InterPro" id="IPR050082">
    <property type="entry name" value="RNA_methyltr_RlmE"/>
</dbReference>
<dbReference type="InterPro" id="IPR002877">
    <property type="entry name" value="RNA_MeTrfase_FtsJ_dom"/>
</dbReference>
<dbReference type="InterPro" id="IPR015507">
    <property type="entry name" value="rRNA-MeTfrase_E"/>
</dbReference>
<dbReference type="InterPro" id="IPR029063">
    <property type="entry name" value="SAM-dependent_MTases_sf"/>
</dbReference>
<dbReference type="NCBIfam" id="NF008390">
    <property type="entry name" value="PRK11188.1"/>
    <property type="match status" value="1"/>
</dbReference>
<dbReference type="PANTHER" id="PTHR10920">
    <property type="entry name" value="RIBOSOMAL RNA METHYLTRANSFERASE"/>
    <property type="match status" value="1"/>
</dbReference>
<dbReference type="PANTHER" id="PTHR10920:SF18">
    <property type="entry name" value="RRNA METHYLTRANSFERASE 2, MITOCHONDRIAL"/>
    <property type="match status" value="1"/>
</dbReference>
<dbReference type="Pfam" id="PF01728">
    <property type="entry name" value="FtsJ"/>
    <property type="match status" value="1"/>
</dbReference>
<dbReference type="PIRSF" id="PIRSF005461">
    <property type="entry name" value="23S_rRNA_mtase"/>
    <property type="match status" value="1"/>
</dbReference>
<dbReference type="SUPFAM" id="SSF53335">
    <property type="entry name" value="S-adenosyl-L-methionine-dependent methyltransferases"/>
    <property type="match status" value="1"/>
</dbReference>
<protein>
    <recommendedName>
        <fullName evidence="1">Ribosomal RNA large subunit methyltransferase E</fullName>
        <ecNumber evidence="1">2.1.1.166</ecNumber>
    </recommendedName>
    <alternativeName>
        <fullName evidence="1">23S rRNA Um2552 methyltransferase</fullName>
    </alternativeName>
    <alternativeName>
        <fullName evidence="1">rRNA (uridine-2'-O-)-methyltransferase</fullName>
    </alternativeName>
</protein>
<keyword id="KW-0963">Cytoplasm</keyword>
<keyword id="KW-0489">Methyltransferase</keyword>
<keyword id="KW-1185">Reference proteome</keyword>
<keyword id="KW-0698">rRNA processing</keyword>
<keyword id="KW-0949">S-adenosyl-L-methionine</keyword>
<keyword id="KW-0808">Transferase</keyword>
<organism>
    <name type="scientific">Xanthomonas oryzae pv. oryzae (strain KACC10331 / KXO85)</name>
    <dbReference type="NCBI Taxonomy" id="291331"/>
    <lineage>
        <taxon>Bacteria</taxon>
        <taxon>Pseudomonadati</taxon>
        <taxon>Pseudomonadota</taxon>
        <taxon>Gammaproteobacteria</taxon>
        <taxon>Lysobacterales</taxon>
        <taxon>Lysobacteraceae</taxon>
        <taxon>Xanthomonas</taxon>
    </lineage>
</organism>
<proteinExistence type="inferred from homology"/>
<gene>
    <name evidence="1" type="primary">rlmE</name>
    <name evidence="1" type="synonym">ftsJ</name>
    <name evidence="1" type="synonym">rrmJ</name>
    <name type="ordered locus">XOO2950</name>
</gene>
<feature type="chain" id="PRO_0000155557" description="Ribosomal RNA large subunit methyltransferase E">
    <location>
        <begin position="1"/>
        <end position="210"/>
    </location>
</feature>
<feature type="active site" description="Proton acceptor" evidence="1">
    <location>
        <position position="162"/>
    </location>
</feature>
<feature type="binding site" evidence="1">
    <location>
        <position position="61"/>
    </location>
    <ligand>
        <name>S-adenosyl-L-methionine</name>
        <dbReference type="ChEBI" id="CHEBI:59789"/>
    </ligand>
</feature>
<feature type="binding site" evidence="1">
    <location>
        <position position="63"/>
    </location>
    <ligand>
        <name>S-adenosyl-L-methionine</name>
        <dbReference type="ChEBI" id="CHEBI:59789"/>
    </ligand>
</feature>
<feature type="binding site" evidence="1">
    <location>
        <position position="81"/>
    </location>
    <ligand>
        <name>S-adenosyl-L-methionine</name>
        <dbReference type="ChEBI" id="CHEBI:59789"/>
    </ligand>
</feature>
<feature type="binding site" evidence="1">
    <location>
        <position position="97"/>
    </location>
    <ligand>
        <name>S-adenosyl-L-methionine</name>
        <dbReference type="ChEBI" id="CHEBI:59789"/>
    </ligand>
</feature>
<feature type="binding site" evidence="1">
    <location>
        <position position="122"/>
    </location>
    <ligand>
        <name>S-adenosyl-L-methionine</name>
        <dbReference type="ChEBI" id="CHEBI:59789"/>
    </ligand>
</feature>